<dbReference type="EMBL" id="EU325680">
    <property type="protein sequence ID" value="ACF08686.1"/>
    <property type="molecule type" value="Genomic_DNA"/>
</dbReference>
<dbReference type="RefSeq" id="YP_002000534.1">
    <property type="nucleotide sequence ID" value="NC_011032.1"/>
</dbReference>
<dbReference type="SMR" id="B3TN98"/>
<dbReference type="FunCoup" id="B3TN98">
    <property type="interactions" value="43"/>
</dbReference>
<dbReference type="STRING" id="15368.B3TN98"/>
<dbReference type="EnsemblPlants" id="KQK04341">
    <property type="protein sequence ID" value="KQK04341"/>
    <property type="gene ID" value="BRADI_2g13075v3"/>
</dbReference>
<dbReference type="GeneID" id="6439793"/>
<dbReference type="Gramene" id="KQK04341">
    <property type="protein sequence ID" value="KQK04341"/>
    <property type="gene ID" value="BRADI_2g13075v3"/>
</dbReference>
<dbReference type="KEGG" id="bdi:6439793"/>
<dbReference type="InParanoid" id="B3TN98"/>
<dbReference type="OrthoDB" id="760839at2759"/>
<dbReference type="Proteomes" id="UP000008810">
    <property type="component" value="Unplaced"/>
</dbReference>
<dbReference type="GO" id="GO:0009535">
    <property type="term" value="C:chloroplast thylakoid membrane"/>
    <property type="evidence" value="ECO:0007669"/>
    <property type="project" value="UniProtKB-SubCell"/>
</dbReference>
<dbReference type="GO" id="GO:0020037">
    <property type="term" value="F:heme binding"/>
    <property type="evidence" value="ECO:0007669"/>
    <property type="project" value="InterPro"/>
</dbReference>
<dbReference type="GO" id="GO:0017004">
    <property type="term" value="P:cytochrome complex assembly"/>
    <property type="evidence" value="ECO:0007669"/>
    <property type="project" value="UniProtKB-UniRule"/>
</dbReference>
<dbReference type="HAMAP" id="MF_01391">
    <property type="entry name" value="CytC_CcsA"/>
    <property type="match status" value="1"/>
</dbReference>
<dbReference type="InterPro" id="IPR002541">
    <property type="entry name" value="Cyt_c_assembly"/>
</dbReference>
<dbReference type="InterPro" id="IPR017562">
    <property type="entry name" value="Cyt_c_biogenesis_CcsA"/>
</dbReference>
<dbReference type="InterPro" id="IPR045062">
    <property type="entry name" value="Cyt_c_biogenesis_CcsA/CcmC"/>
</dbReference>
<dbReference type="NCBIfam" id="TIGR03144">
    <property type="entry name" value="cytochr_II_ccsB"/>
    <property type="match status" value="1"/>
</dbReference>
<dbReference type="PANTHER" id="PTHR30071:SF1">
    <property type="entry name" value="CYTOCHROME B_B6 PROTEIN-RELATED"/>
    <property type="match status" value="1"/>
</dbReference>
<dbReference type="PANTHER" id="PTHR30071">
    <property type="entry name" value="HEME EXPORTER PROTEIN C"/>
    <property type="match status" value="1"/>
</dbReference>
<dbReference type="Pfam" id="PF01578">
    <property type="entry name" value="Cytochrom_C_asm"/>
    <property type="match status" value="1"/>
</dbReference>
<evidence type="ECO:0000255" key="1">
    <source>
        <dbReference type="HAMAP-Rule" id="MF_01391"/>
    </source>
</evidence>
<geneLocation type="chloroplast"/>
<proteinExistence type="inferred from homology"/>
<keyword id="KW-0150">Chloroplast</keyword>
<keyword id="KW-0201">Cytochrome c-type biogenesis</keyword>
<keyword id="KW-0472">Membrane</keyword>
<keyword id="KW-0934">Plastid</keyword>
<keyword id="KW-1185">Reference proteome</keyword>
<keyword id="KW-0793">Thylakoid</keyword>
<keyword id="KW-0812">Transmembrane</keyword>
<keyword id="KW-1133">Transmembrane helix</keyword>
<accession>B3TN98</accession>
<gene>
    <name evidence="1" type="primary">ccsA</name>
</gene>
<name>CCSA_BRADI</name>
<protein>
    <recommendedName>
        <fullName evidence="1">Cytochrome c biogenesis protein CcsA</fullName>
    </recommendedName>
</protein>
<reference key="1">
    <citation type="journal article" date="2008" name="BMC Res. Notes">
        <title>The complete chloroplast genome sequence of Brachypodium distachyon: sequence comparison and phylogenetic analysis of eight grass plastomes.</title>
        <authorList>
            <person name="Bortiri E."/>
            <person name="Coleman-Derr D."/>
            <person name="Lazo G.R."/>
            <person name="Anderson O.D."/>
            <person name="Gu Y.Q."/>
        </authorList>
    </citation>
    <scope>NUCLEOTIDE SEQUENCE [LARGE SCALE GENOMIC DNA]</scope>
    <source>
        <strain>cv. Bd21</strain>
    </source>
</reference>
<comment type="function">
    <text evidence="1">Required during biogenesis of c-type cytochromes (cytochrome c6 and cytochrome f) at the step of heme attachment.</text>
</comment>
<comment type="subunit">
    <text evidence="1">May interact with Ccs1.</text>
</comment>
<comment type="subcellular location">
    <subcellularLocation>
        <location evidence="1">Plastid</location>
        <location evidence="1">Chloroplast thylakoid membrane</location>
        <topology evidence="1">Multi-pass membrane protein</topology>
    </subcellularLocation>
</comment>
<comment type="similarity">
    <text evidence="1">Belongs to the CcmF/CycK/Ccl1/NrfE/CcsA family.</text>
</comment>
<feature type="chain" id="PRO_0000353734" description="Cytochrome c biogenesis protein CcsA">
    <location>
        <begin position="1"/>
        <end position="322"/>
    </location>
</feature>
<feature type="transmembrane region" description="Helical" evidence="1">
    <location>
        <begin position="2"/>
        <end position="22"/>
    </location>
</feature>
<feature type="transmembrane region" description="Helical" evidence="1">
    <location>
        <begin position="44"/>
        <end position="64"/>
    </location>
</feature>
<feature type="transmembrane region" description="Helical" evidence="1">
    <location>
        <begin position="68"/>
        <end position="88"/>
    </location>
</feature>
<feature type="transmembrane region" description="Helical" evidence="1">
    <location>
        <begin position="143"/>
        <end position="163"/>
    </location>
</feature>
<feature type="transmembrane region" description="Helical" evidence="1">
    <location>
        <begin position="226"/>
        <end position="246"/>
    </location>
</feature>
<feature type="transmembrane region" description="Helical" evidence="1">
    <location>
        <begin position="260"/>
        <end position="274"/>
    </location>
</feature>
<feature type="transmembrane region" description="Helical" evidence="1">
    <location>
        <begin position="289"/>
        <end position="309"/>
    </location>
</feature>
<sequence length="322" mass="36716">MLFATLEHILTHISFSTISIVITIHLRALLVRELGGLRDSSEKGMIATFFSITGFLVSRWLSSGHFPLSNLYESLIFLSWALYILHTIPKVQNSKNDLSTITTPSTILTQGFATSGLLTEMHQSTILVPALQSQWLMMHVSMMLLSYATLLCGSLLSAAILIIRFRNNFNFFSKKNKNVLKKTFLFSKMEYFYAKRSYFKSASVPSFPNYYKYQLTERLDSWSYRVISLGFTLLTIGILCGAVWANEAWGSYWNWDPKETWAFITWTIFAIYLHSRTNQNWKGTNSALVASIGFLIIWICYFGINLLGIGLHSYGSFTLTPN</sequence>
<organism>
    <name type="scientific">Brachypodium distachyon</name>
    <name type="common">Purple false brome</name>
    <name type="synonym">Trachynia distachya</name>
    <dbReference type="NCBI Taxonomy" id="15368"/>
    <lineage>
        <taxon>Eukaryota</taxon>
        <taxon>Viridiplantae</taxon>
        <taxon>Streptophyta</taxon>
        <taxon>Embryophyta</taxon>
        <taxon>Tracheophyta</taxon>
        <taxon>Spermatophyta</taxon>
        <taxon>Magnoliopsida</taxon>
        <taxon>Liliopsida</taxon>
        <taxon>Poales</taxon>
        <taxon>Poaceae</taxon>
        <taxon>BOP clade</taxon>
        <taxon>Pooideae</taxon>
        <taxon>Stipodae</taxon>
        <taxon>Brachypodieae</taxon>
        <taxon>Brachypodium</taxon>
    </lineage>
</organism>